<reference key="1">
    <citation type="journal article" date="2008" name="J. Biotechnol.">
        <title>The lifestyle of Corynebacterium urealyticum derived from its complete genome sequence established by pyrosequencing.</title>
        <authorList>
            <person name="Tauch A."/>
            <person name="Trost E."/>
            <person name="Tilker A."/>
            <person name="Ludewig U."/>
            <person name="Schneiker S."/>
            <person name="Goesmann A."/>
            <person name="Arnold W."/>
            <person name="Bekel T."/>
            <person name="Brinkrolf K."/>
            <person name="Brune I."/>
            <person name="Goetker S."/>
            <person name="Kalinowski J."/>
            <person name="Kamp P.-B."/>
            <person name="Lobo F.P."/>
            <person name="Viehoever P."/>
            <person name="Weisshaar B."/>
            <person name="Soriano F."/>
            <person name="Droege M."/>
            <person name="Puehler A."/>
        </authorList>
    </citation>
    <scope>NUCLEOTIDE SEQUENCE [LARGE SCALE GENOMIC DNA]</scope>
    <source>
        <strain>ATCC 43042 / DSM 7109</strain>
    </source>
</reference>
<protein>
    <recommendedName>
        <fullName evidence="1">ATP synthase subunit delta</fullName>
    </recommendedName>
    <alternativeName>
        <fullName evidence="1">ATP synthase F(1) sector subunit delta</fullName>
    </alternativeName>
    <alternativeName>
        <fullName evidence="1">F-type ATPase subunit delta</fullName>
        <shortName evidence="1">F-ATPase subunit delta</shortName>
    </alternativeName>
</protein>
<sequence>MHAASREAFERLIKTLDQGLKESDNAVGNGATTGTELFDVVDVLDQERSLRVAMVDAAATPEQRVELVKTLLSGKVTASTEEIVSAAVSQNWSNSQDFRTGLERLGRRALLRSAEAQGQLERVEEELFSLARILERESELELLLSDRAAAVDDRRDLLAKVLYGKVSSVTEALALQAVGRARKAPVDLLDDLCQEAASLNGYEVARVTSAGPLSEEQKASLSEKLHKIYGRKIAVHTEVDSSLLGGAVVRVGDEVIDGSTAGKLERMRRSLA</sequence>
<feature type="chain" id="PRO_0000382092" description="ATP synthase subunit delta">
    <location>
        <begin position="1"/>
        <end position="272"/>
    </location>
</feature>
<dbReference type="EMBL" id="AM942444">
    <property type="protein sequence ID" value="CAQ04673.1"/>
    <property type="molecule type" value="Genomic_DNA"/>
</dbReference>
<dbReference type="RefSeq" id="WP_012359964.1">
    <property type="nucleotide sequence ID" value="NC_010545.1"/>
</dbReference>
<dbReference type="SMR" id="B1VFY4"/>
<dbReference type="STRING" id="504474.cu0713"/>
<dbReference type="GeneID" id="60603489"/>
<dbReference type="KEGG" id="cur:cu0713"/>
<dbReference type="eggNOG" id="COG0712">
    <property type="taxonomic scope" value="Bacteria"/>
</dbReference>
<dbReference type="HOGENOM" id="CLU_088880_0_0_11"/>
<dbReference type="Proteomes" id="UP000001727">
    <property type="component" value="Chromosome"/>
</dbReference>
<dbReference type="GO" id="GO:0005886">
    <property type="term" value="C:plasma membrane"/>
    <property type="evidence" value="ECO:0007669"/>
    <property type="project" value="UniProtKB-SubCell"/>
</dbReference>
<dbReference type="GO" id="GO:0045259">
    <property type="term" value="C:proton-transporting ATP synthase complex"/>
    <property type="evidence" value="ECO:0007669"/>
    <property type="project" value="UniProtKB-KW"/>
</dbReference>
<dbReference type="GO" id="GO:0046933">
    <property type="term" value="F:proton-transporting ATP synthase activity, rotational mechanism"/>
    <property type="evidence" value="ECO:0007669"/>
    <property type="project" value="UniProtKB-UniRule"/>
</dbReference>
<dbReference type="Gene3D" id="1.10.520.20">
    <property type="entry name" value="N-terminal domain of the delta subunit of the F1F0-ATP synthase"/>
    <property type="match status" value="1"/>
</dbReference>
<dbReference type="HAMAP" id="MF_01416">
    <property type="entry name" value="ATP_synth_delta_bact"/>
    <property type="match status" value="1"/>
</dbReference>
<dbReference type="InterPro" id="IPR026015">
    <property type="entry name" value="ATP_synth_OSCP/delta_N_sf"/>
</dbReference>
<dbReference type="InterPro" id="IPR020781">
    <property type="entry name" value="ATPase_OSCP/d_CS"/>
</dbReference>
<dbReference type="InterPro" id="IPR000711">
    <property type="entry name" value="ATPase_OSCP/dsu"/>
</dbReference>
<dbReference type="NCBIfam" id="TIGR01145">
    <property type="entry name" value="ATP_synt_delta"/>
    <property type="match status" value="1"/>
</dbReference>
<dbReference type="NCBIfam" id="NF009967">
    <property type="entry name" value="PRK13430.1"/>
    <property type="match status" value="1"/>
</dbReference>
<dbReference type="PANTHER" id="PTHR11910">
    <property type="entry name" value="ATP SYNTHASE DELTA CHAIN"/>
    <property type="match status" value="1"/>
</dbReference>
<dbReference type="Pfam" id="PF00213">
    <property type="entry name" value="OSCP"/>
    <property type="match status" value="1"/>
</dbReference>
<dbReference type="PRINTS" id="PR00125">
    <property type="entry name" value="ATPASEDELTA"/>
</dbReference>
<dbReference type="PROSITE" id="PS00389">
    <property type="entry name" value="ATPASE_DELTA"/>
    <property type="match status" value="1"/>
</dbReference>
<name>ATPD_CORU7</name>
<proteinExistence type="inferred from homology"/>
<gene>
    <name evidence="1" type="primary">atpH</name>
    <name type="ordered locus">cu0713</name>
</gene>
<keyword id="KW-0066">ATP synthesis</keyword>
<keyword id="KW-1003">Cell membrane</keyword>
<keyword id="KW-0139">CF(1)</keyword>
<keyword id="KW-0375">Hydrogen ion transport</keyword>
<keyword id="KW-0406">Ion transport</keyword>
<keyword id="KW-0472">Membrane</keyword>
<keyword id="KW-1185">Reference proteome</keyword>
<keyword id="KW-0813">Transport</keyword>
<comment type="function">
    <text evidence="1">F(1)F(0) ATP synthase produces ATP from ADP in the presence of a proton or sodium gradient. F-type ATPases consist of two structural domains, F(1) containing the extramembraneous catalytic core and F(0) containing the membrane proton channel, linked together by a central stalk and a peripheral stalk. During catalysis, ATP synthesis in the catalytic domain of F(1) is coupled via a rotary mechanism of the central stalk subunits to proton translocation.</text>
</comment>
<comment type="function">
    <text evidence="1">This protein is part of the stalk that links CF(0) to CF(1). It either transmits conformational changes from CF(0) to CF(1) or is implicated in proton conduction.</text>
</comment>
<comment type="subunit">
    <text evidence="1">F-type ATPases have 2 components, F(1) - the catalytic core - and F(0) - the membrane proton channel. F(1) has five subunits: alpha(3), beta(3), gamma(1), delta(1), epsilon(1). F(0) has three main subunits: a(1), b(2) and c(10-14). The alpha and beta chains form an alternating ring which encloses part of the gamma chain. F(1) is attached to F(0) by a central stalk formed by the gamma and epsilon chains, while a peripheral stalk is formed by the delta and b chains.</text>
</comment>
<comment type="subcellular location">
    <subcellularLocation>
        <location evidence="1">Cell membrane</location>
        <topology evidence="1">Peripheral membrane protein</topology>
    </subcellularLocation>
</comment>
<comment type="similarity">
    <text evidence="1">Belongs to the ATPase delta chain family.</text>
</comment>
<accession>B1VFY4</accession>
<organism>
    <name type="scientific">Corynebacterium urealyticum (strain ATCC 43042 / DSM 7109)</name>
    <dbReference type="NCBI Taxonomy" id="504474"/>
    <lineage>
        <taxon>Bacteria</taxon>
        <taxon>Bacillati</taxon>
        <taxon>Actinomycetota</taxon>
        <taxon>Actinomycetes</taxon>
        <taxon>Mycobacteriales</taxon>
        <taxon>Corynebacteriaceae</taxon>
        <taxon>Corynebacterium</taxon>
    </lineage>
</organism>
<evidence type="ECO:0000255" key="1">
    <source>
        <dbReference type="HAMAP-Rule" id="MF_01416"/>
    </source>
</evidence>